<keyword id="KW-0456">Lyase</keyword>
<keyword id="KW-0663">Pyridoxal phosphate</keyword>
<keyword id="KW-0704">Schiff base</keyword>
<reference key="1">
    <citation type="journal article" date="2009" name="Proc. Natl. Acad. Sci. U.S.A.">
        <title>Biogeography of the Sulfolobus islandicus pan-genome.</title>
        <authorList>
            <person name="Reno M.L."/>
            <person name="Held N.L."/>
            <person name="Fields C.J."/>
            <person name="Burke P.V."/>
            <person name="Whitaker R.J."/>
        </authorList>
    </citation>
    <scope>NUCLEOTIDE SEQUENCE [LARGE SCALE GENOMIC DNA]</scope>
    <source>
        <strain>M.14.25 / Kamchatka #1</strain>
    </source>
</reference>
<feature type="chain" id="PRO_1000216064" description="Pyridoxal 5'-phosphate synthase subunit PdxS">
    <location>
        <begin position="1"/>
        <end position="338"/>
    </location>
</feature>
<feature type="active site" description="Schiff-base intermediate with D-ribose 5-phosphate" evidence="1">
    <location>
        <position position="123"/>
    </location>
</feature>
<feature type="binding site" evidence="1">
    <location>
        <position position="66"/>
    </location>
    <ligand>
        <name>D-ribose 5-phosphate</name>
        <dbReference type="ChEBI" id="CHEBI:78346"/>
    </ligand>
</feature>
<feature type="binding site" evidence="1">
    <location>
        <position position="195"/>
    </location>
    <ligand>
        <name>D-ribose 5-phosphate</name>
        <dbReference type="ChEBI" id="CHEBI:78346"/>
    </ligand>
</feature>
<feature type="binding site" evidence="1">
    <location>
        <position position="207"/>
    </location>
    <ligand>
        <name>D-glyceraldehyde 3-phosphate</name>
        <dbReference type="ChEBI" id="CHEBI:59776"/>
    </ligand>
</feature>
<feature type="binding site" evidence="1">
    <location>
        <position position="256"/>
    </location>
    <ligand>
        <name>D-ribose 5-phosphate</name>
        <dbReference type="ChEBI" id="CHEBI:78346"/>
    </ligand>
</feature>
<feature type="binding site" evidence="1">
    <location>
        <begin position="277"/>
        <end position="278"/>
    </location>
    <ligand>
        <name>D-ribose 5-phosphate</name>
        <dbReference type="ChEBI" id="CHEBI:78346"/>
    </ligand>
</feature>
<evidence type="ECO:0000255" key="1">
    <source>
        <dbReference type="HAMAP-Rule" id="MF_01824"/>
    </source>
</evidence>
<dbReference type="EC" id="4.3.3.6" evidence="1"/>
<dbReference type="EMBL" id="CP001400">
    <property type="protein sequence ID" value="ACP38308.1"/>
    <property type="molecule type" value="Genomic_DNA"/>
</dbReference>
<dbReference type="RefSeq" id="WP_012711553.1">
    <property type="nucleotide sequence ID" value="NC_012588.1"/>
</dbReference>
<dbReference type="SMR" id="C3MW86"/>
<dbReference type="GeneID" id="84061870"/>
<dbReference type="KEGG" id="sia:M1425_1559"/>
<dbReference type="HOGENOM" id="CLU_055352_1_0_2"/>
<dbReference type="UniPathway" id="UPA00245"/>
<dbReference type="Proteomes" id="UP000001350">
    <property type="component" value="Chromosome"/>
</dbReference>
<dbReference type="GO" id="GO:0036381">
    <property type="term" value="F:pyridoxal 5'-phosphate synthase (glutamine hydrolysing) activity"/>
    <property type="evidence" value="ECO:0007669"/>
    <property type="project" value="UniProtKB-UniRule"/>
</dbReference>
<dbReference type="GO" id="GO:0006520">
    <property type="term" value="P:amino acid metabolic process"/>
    <property type="evidence" value="ECO:0007669"/>
    <property type="project" value="TreeGrafter"/>
</dbReference>
<dbReference type="GO" id="GO:0042823">
    <property type="term" value="P:pyridoxal phosphate biosynthetic process"/>
    <property type="evidence" value="ECO:0007669"/>
    <property type="project" value="UniProtKB-UniRule"/>
</dbReference>
<dbReference type="GO" id="GO:0008615">
    <property type="term" value="P:pyridoxine biosynthetic process"/>
    <property type="evidence" value="ECO:0007669"/>
    <property type="project" value="TreeGrafter"/>
</dbReference>
<dbReference type="CDD" id="cd04727">
    <property type="entry name" value="pdxS"/>
    <property type="match status" value="1"/>
</dbReference>
<dbReference type="FunFam" id="3.20.20.70:FF:000001">
    <property type="entry name" value="Pyridoxine biosynthesis protein PDX1"/>
    <property type="match status" value="1"/>
</dbReference>
<dbReference type="Gene3D" id="3.20.20.70">
    <property type="entry name" value="Aldolase class I"/>
    <property type="match status" value="1"/>
</dbReference>
<dbReference type="HAMAP" id="MF_01824">
    <property type="entry name" value="PdxS"/>
    <property type="match status" value="1"/>
</dbReference>
<dbReference type="InterPro" id="IPR013785">
    <property type="entry name" value="Aldolase_TIM"/>
</dbReference>
<dbReference type="InterPro" id="IPR001852">
    <property type="entry name" value="PdxS/SNZ"/>
</dbReference>
<dbReference type="InterPro" id="IPR033755">
    <property type="entry name" value="PdxS/SNZ_N"/>
</dbReference>
<dbReference type="InterPro" id="IPR011060">
    <property type="entry name" value="RibuloseP-bd_barrel"/>
</dbReference>
<dbReference type="NCBIfam" id="NF003215">
    <property type="entry name" value="PRK04180.1"/>
    <property type="match status" value="1"/>
</dbReference>
<dbReference type="PANTHER" id="PTHR31829">
    <property type="entry name" value="PYRIDOXAL 5'-PHOSPHATE SYNTHASE SUBUNIT SNZ1-RELATED"/>
    <property type="match status" value="1"/>
</dbReference>
<dbReference type="PANTHER" id="PTHR31829:SF0">
    <property type="entry name" value="PYRIDOXAL 5'-PHOSPHATE SYNTHASE SUBUNIT SNZ1-RELATED"/>
    <property type="match status" value="1"/>
</dbReference>
<dbReference type="Pfam" id="PF01680">
    <property type="entry name" value="SOR_SNZ"/>
    <property type="match status" value="1"/>
</dbReference>
<dbReference type="PIRSF" id="PIRSF029271">
    <property type="entry name" value="Pdx1"/>
    <property type="match status" value="1"/>
</dbReference>
<dbReference type="SUPFAM" id="SSF51366">
    <property type="entry name" value="Ribulose-phoshate binding barrel"/>
    <property type="match status" value="1"/>
</dbReference>
<dbReference type="PROSITE" id="PS01235">
    <property type="entry name" value="PDXS_SNZ_1"/>
    <property type="match status" value="1"/>
</dbReference>
<dbReference type="PROSITE" id="PS51129">
    <property type="entry name" value="PDXS_SNZ_2"/>
    <property type="match status" value="1"/>
</dbReference>
<organism>
    <name type="scientific">Saccharolobus islandicus (strain M.14.25 / Kamchatka #1)</name>
    <name type="common">Sulfolobus islandicus</name>
    <dbReference type="NCBI Taxonomy" id="427317"/>
    <lineage>
        <taxon>Archaea</taxon>
        <taxon>Thermoproteota</taxon>
        <taxon>Thermoprotei</taxon>
        <taxon>Sulfolobales</taxon>
        <taxon>Sulfolobaceae</taxon>
        <taxon>Saccharolobus</taxon>
    </lineage>
</organism>
<name>PDXS_SACI4</name>
<proteinExistence type="inferred from homology"/>
<sequence>MRLYELSFAQIEDFFYKLAEVKDIIKDSGLMEFLPELKKLDSTIQTGTTRVKHAFPIFQKGGVVMDITNVQQAQIAEEAGAVAVMVLDKLPYDVRKSGGVARMADPKIIGEVMNSITIPVMAKVRIGHYYEAKLLEALGVDMIDESEVLTPADEEHHINKWEFSVPFVNGARNLGEALRRTAEGASMIRTKGEAGTGNVSEAVKHMKIINSEIRSLISMSEEDRVKKAREYQVPYQLVELTAKIKRLPIVNFAAGGIATPADAALMMWLGADGLFVGSGIFKSQDPDERAKAVVLAAACWEYPEIVLEAQKMISEQKSMMGIDIKSLKPEELLQVRGL</sequence>
<comment type="function">
    <text evidence="1">Catalyzes the formation of pyridoxal 5'-phosphate from ribose 5-phosphate (RBP), glyceraldehyde 3-phosphate (G3P) and ammonia. The ammonia is provided by the PdxT subunit. Can also use ribulose 5-phosphate and dihydroxyacetone phosphate as substrates, resulting from enzyme-catalyzed isomerization of RBP and G3P, respectively.</text>
</comment>
<comment type="catalytic activity">
    <reaction evidence="1">
        <text>aldehydo-D-ribose 5-phosphate + D-glyceraldehyde 3-phosphate + L-glutamine = pyridoxal 5'-phosphate + L-glutamate + phosphate + 3 H2O + H(+)</text>
        <dbReference type="Rhea" id="RHEA:31507"/>
        <dbReference type="ChEBI" id="CHEBI:15377"/>
        <dbReference type="ChEBI" id="CHEBI:15378"/>
        <dbReference type="ChEBI" id="CHEBI:29985"/>
        <dbReference type="ChEBI" id="CHEBI:43474"/>
        <dbReference type="ChEBI" id="CHEBI:58273"/>
        <dbReference type="ChEBI" id="CHEBI:58359"/>
        <dbReference type="ChEBI" id="CHEBI:59776"/>
        <dbReference type="ChEBI" id="CHEBI:597326"/>
        <dbReference type="EC" id="4.3.3.6"/>
    </reaction>
</comment>
<comment type="pathway">
    <text evidence="1">Cofactor biosynthesis; pyridoxal 5'-phosphate biosynthesis.</text>
</comment>
<comment type="subunit">
    <text evidence="1">In the presence of PdxT, forms a dodecamer of heterodimers.</text>
</comment>
<comment type="similarity">
    <text evidence="1">Belongs to the PdxS/SNZ family.</text>
</comment>
<accession>C3MW86</accession>
<gene>
    <name evidence="1" type="primary">pdxS</name>
    <name type="ordered locus">M1425_1559</name>
</gene>
<protein>
    <recommendedName>
        <fullName evidence="1">Pyridoxal 5'-phosphate synthase subunit PdxS</fullName>
        <shortName evidence="1">PLP synthase subunit PdxS</shortName>
        <ecNumber evidence="1">4.3.3.6</ecNumber>
    </recommendedName>
    <alternativeName>
        <fullName evidence="1">Pdx1</fullName>
    </alternativeName>
</protein>